<dbReference type="EMBL" id="FM177140">
    <property type="protein sequence ID" value="CAQ67733.1"/>
    <property type="molecule type" value="Genomic_DNA"/>
</dbReference>
<dbReference type="SMR" id="B3WAL4"/>
<dbReference type="KEGG" id="lcb:LCABL_26670"/>
<dbReference type="HOGENOM" id="CLU_036235_2_1_9"/>
<dbReference type="GO" id="GO:0015934">
    <property type="term" value="C:large ribosomal subunit"/>
    <property type="evidence" value="ECO:0007669"/>
    <property type="project" value="InterPro"/>
</dbReference>
<dbReference type="GO" id="GO:0019843">
    <property type="term" value="F:rRNA binding"/>
    <property type="evidence" value="ECO:0007669"/>
    <property type="project" value="UniProtKB-UniRule"/>
</dbReference>
<dbReference type="GO" id="GO:0003735">
    <property type="term" value="F:structural constituent of ribosome"/>
    <property type="evidence" value="ECO:0007669"/>
    <property type="project" value="InterPro"/>
</dbReference>
<dbReference type="GO" id="GO:0016740">
    <property type="term" value="F:transferase activity"/>
    <property type="evidence" value="ECO:0007669"/>
    <property type="project" value="InterPro"/>
</dbReference>
<dbReference type="GO" id="GO:0002181">
    <property type="term" value="P:cytoplasmic translation"/>
    <property type="evidence" value="ECO:0007669"/>
    <property type="project" value="TreeGrafter"/>
</dbReference>
<dbReference type="FunFam" id="2.30.30.30:FF:000001">
    <property type="entry name" value="50S ribosomal protein L2"/>
    <property type="match status" value="1"/>
</dbReference>
<dbReference type="FunFam" id="2.40.50.140:FF:000003">
    <property type="entry name" value="50S ribosomal protein L2"/>
    <property type="match status" value="1"/>
</dbReference>
<dbReference type="FunFam" id="4.10.950.10:FF:000001">
    <property type="entry name" value="50S ribosomal protein L2"/>
    <property type="match status" value="1"/>
</dbReference>
<dbReference type="Gene3D" id="2.30.30.30">
    <property type="match status" value="1"/>
</dbReference>
<dbReference type="Gene3D" id="2.40.50.140">
    <property type="entry name" value="Nucleic acid-binding proteins"/>
    <property type="match status" value="1"/>
</dbReference>
<dbReference type="Gene3D" id="4.10.950.10">
    <property type="entry name" value="Ribosomal protein L2, domain 3"/>
    <property type="match status" value="1"/>
</dbReference>
<dbReference type="HAMAP" id="MF_01320_B">
    <property type="entry name" value="Ribosomal_uL2_B"/>
    <property type="match status" value="1"/>
</dbReference>
<dbReference type="InterPro" id="IPR012340">
    <property type="entry name" value="NA-bd_OB-fold"/>
</dbReference>
<dbReference type="InterPro" id="IPR014722">
    <property type="entry name" value="Rib_uL2_dom2"/>
</dbReference>
<dbReference type="InterPro" id="IPR002171">
    <property type="entry name" value="Ribosomal_uL2"/>
</dbReference>
<dbReference type="InterPro" id="IPR005880">
    <property type="entry name" value="Ribosomal_uL2_bac/org-type"/>
</dbReference>
<dbReference type="InterPro" id="IPR022669">
    <property type="entry name" value="Ribosomal_uL2_C"/>
</dbReference>
<dbReference type="InterPro" id="IPR022671">
    <property type="entry name" value="Ribosomal_uL2_CS"/>
</dbReference>
<dbReference type="InterPro" id="IPR014726">
    <property type="entry name" value="Ribosomal_uL2_dom3"/>
</dbReference>
<dbReference type="InterPro" id="IPR022666">
    <property type="entry name" value="Ribosomal_uL2_RNA-bd_dom"/>
</dbReference>
<dbReference type="InterPro" id="IPR008991">
    <property type="entry name" value="Translation_prot_SH3-like_sf"/>
</dbReference>
<dbReference type="NCBIfam" id="TIGR01171">
    <property type="entry name" value="rplB_bact"/>
    <property type="match status" value="1"/>
</dbReference>
<dbReference type="PANTHER" id="PTHR13691:SF5">
    <property type="entry name" value="LARGE RIBOSOMAL SUBUNIT PROTEIN UL2M"/>
    <property type="match status" value="1"/>
</dbReference>
<dbReference type="PANTHER" id="PTHR13691">
    <property type="entry name" value="RIBOSOMAL PROTEIN L2"/>
    <property type="match status" value="1"/>
</dbReference>
<dbReference type="Pfam" id="PF00181">
    <property type="entry name" value="Ribosomal_L2"/>
    <property type="match status" value="1"/>
</dbReference>
<dbReference type="Pfam" id="PF03947">
    <property type="entry name" value="Ribosomal_L2_C"/>
    <property type="match status" value="1"/>
</dbReference>
<dbReference type="PIRSF" id="PIRSF002158">
    <property type="entry name" value="Ribosomal_L2"/>
    <property type="match status" value="1"/>
</dbReference>
<dbReference type="SMART" id="SM01383">
    <property type="entry name" value="Ribosomal_L2"/>
    <property type="match status" value="1"/>
</dbReference>
<dbReference type="SMART" id="SM01382">
    <property type="entry name" value="Ribosomal_L2_C"/>
    <property type="match status" value="1"/>
</dbReference>
<dbReference type="SUPFAM" id="SSF50249">
    <property type="entry name" value="Nucleic acid-binding proteins"/>
    <property type="match status" value="1"/>
</dbReference>
<dbReference type="SUPFAM" id="SSF50104">
    <property type="entry name" value="Translation proteins SH3-like domain"/>
    <property type="match status" value="1"/>
</dbReference>
<dbReference type="PROSITE" id="PS00467">
    <property type="entry name" value="RIBOSOMAL_L2"/>
    <property type="match status" value="1"/>
</dbReference>
<proteinExistence type="inferred from homology"/>
<accession>B3WAL4</accession>
<organism>
    <name type="scientific">Lacticaseibacillus casei (strain BL23)</name>
    <name type="common">Lactobacillus casei</name>
    <dbReference type="NCBI Taxonomy" id="543734"/>
    <lineage>
        <taxon>Bacteria</taxon>
        <taxon>Bacillati</taxon>
        <taxon>Bacillota</taxon>
        <taxon>Bacilli</taxon>
        <taxon>Lactobacillales</taxon>
        <taxon>Lactobacillaceae</taxon>
        <taxon>Lacticaseibacillus</taxon>
    </lineage>
</organism>
<feature type="chain" id="PRO_1000141569" description="Large ribosomal subunit protein uL2">
    <location>
        <begin position="1"/>
        <end position="278"/>
    </location>
</feature>
<feature type="region of interest" description="Disordered" evidence="2">
    <location>
        <begin position="223"/>
        <end position="278"/>
    </location>
</feature>
<feature type="compositionally biased region" description="Basic residues" evidence="2">
    <location>
        <begin position="255"/>
        <end position="264"/>
    </location>
</feature>
<reference key="1">
    <citation type="submission" date="2008-06" db="EMBL/GenBank/DDBJ databases">
        <title>Lactobacillus casei BL23 complete genome sequence.</title>
        <authorList>
            <person name="Maze A."/>
            <person name="Boel G."/>
            <person name="Bourand A."/>
            <person name="Loux V."/>
            <person name="Gibrat J.F."/>
            <person name="Zuniga M."/>
            <person name="Hartke A."/>
            <person name="Deutscher J."/>
        </authorList>
    </citation>
    <scope>NUCLEOTIDE SEQUENCE [LARGE SCALE GENOMIC DNA]</scope>
    <source>
        <strain>BL23</strain>
    </source>
</reference>
<protein>
    <recommendedName>
        <fullName evidence="1">Large ribosomal subunit protein uL2</fullName>
    </recommendedName>
    <alternativeName>
        <fullName evidence="3">50S ribosomal protein L2</fullName>
    </alternativeName>
</protein>
<evidence type="ECO:0000255" key="1">
    <source>
        <dbReference type="HAMAP-Rule" id="MF_01320"/>
    </source>
</evidence>
<evidence type="ECO:0000256" key="2">
    <source>
        <dbReference type="SAM" id="MobiDB-lite"/>
    </source>
</evidence>
<evidence type="ECO:0000305" key="3"/>
<sequence length="278" mass="30337">MAIIKYKPTSNGRRNMSGSDFAEITKTKPEKTLLVSQSHTAGRNAHGHITVRHRGGGHKQFYRVIDFKRNKDGMAATVKAIEYDPNRTANIALLHYEDGVKSYILAPKGLKVGDKVYSGEDVDIKVGNSLQLKNIPAGTTIHNIELKPGKGAQLARSAGVSAQLLGKDNDKYVTVKLASGEVRLILAENRATIGAVGNEQHELISIGKAGRKRWLGFRPTVRGSVMNPNDHPHGGGEGKAPIGHPSPMSPWGKKTLGKKTRDHKAKSEKFIVRHRRAK</sequence>
<comment type="function">
    <text evidence="1">One of the primary rRNA binding proteins. Required for association of the 30S and 50S subunits to form the 70S ribosome, for tRNA binding and peptide bond formation. It has been suggested to have peptidyltransferase activity; this is somewhat controversial. Makes several contacts with the 16S rRNA in the 70S ribosome.</text>
</comment>
<comment type="subunit">
    <text evidence="1">Part of the 50S ribosomal subunit. Forms a bridge to the 30S subunit in the 70S ribosome.</text>
</comment>
<comment type="similarity">
    <text evidence="1">Belongs to the universal ribosomal protein uL2 family.</text>
</comment>
<name>RL2_LACCB</name>
<gene>
    <name evidence="1" type="primary">rplB</name>
    <name type="ordered locus">LCABL_26670</name>
</gene>
<keyword id="KW-0687">Ribonucleoprotein</keyword>
<keyword id="KW-0689">Ribosomal protein</keyword>
<keyword id="KW-0694">RNA-binding</keyword>
<keyword id="KW-0699">rRNA-binding</keyword>